<feature type="chain" id="PRO_0000047099" description="B-cell lymphoma 6 protein homolog">
    <location>
        <begin position="1"/>
        <end position="707"/>
    </location>
</feature>
<feature type="domain" description="BTB" evidence="2">
    <location>
        <begin position="32"/>
        <end position="99"/>
    </location>
</feature>
<feature type="zinc finger region" description="C2H2-type 1" evidence="3">
    <location>
        <begin position="519"/>
        <end position="542"/>
    </location>
</feature>
<feature type="zinc finger region" description="C2H2-type 2" evidence="3">
    <location>
        <begin position="547"/>
        <end position="569"/>
    </location>
</feature>
<feature type="zinc finger region" description="C2H2-type 3" evidence="3">
    <location>
        <begin position="575"/>
        <end position="597"/>
    </location>
</feature>
<feature type="zinc finger region" description="C2H2-type 4" evidence="3">
    <location>
        <begin position="603"/>
        <end position="625"/>
    </location>
</feature>
<feature type="zinc finger region" description="C2H2-type 5" evidence="3">
    <location>
        <begin position="631"/>
        <end position="653"/>
    </location>
</feature>
<feature type="zinc finger region" description="C2H2-type 6" evidence="3">
    <location>
        <begin position="659"/>
        <end position="682"/>
    </location>
</feature>
<feature type="region of interest" description="Disordered" evidence="4">
    <location>
        <begin position="275"/>
        <end position="350"/>
    </location>
</feature>
<feature type="region of interest" description="Required for interaction with NuRD complex and for transcriptional repressor activity">
    <location>
        <begin position="377"/>
        <end position="380"/>
    </location>
</feature>
<feature type="region of interest" description="Disordered" evidence="4">
    <location>
        <begin position="405"/>
        <end position="469"/>
    </location>
</feature>
<feature type="compositionally biased region" description="Basic and acidic residues" evidence="4">
    <location>
        <begin position="299"/>
        <end position="315"/>
    </location>
</feature>
<feature type="compositionally biased region" description="Polar residues" evidence="4">
    <location>
        <begin position="331"/>
        <end position="350"/>
    </location>
</feature>
<feature type="compositionally biased region" description="Pro residues" evidence="4">
    <location>
        <begin position="409"/>
        <end position="420"/>
    </location>
</feature>
<feature type="compositionally biased region" description="Polar residues" evidence="4">
    <location>
        <begin position="425"/>
        <end position="452"/>
    </location>
</feature>
<feature type="compositionally biased region" description="Low complexity" evidence="4">
    <location>
        <begin position="458"/>
        <end position="467"/>
    </location>
</feature>
<feature type="modified residue" description="Phosphoserine" evidence="15">
    <location>
        <position position="334"/>
    </location>
</feature>
<feature type="modified residue" description="Phosphoserine; by MAPK1" evidence="1">
    <location>
        <position position="344"/>
    </location>
</feature>
<feature type="modified residue" description="Phosphoserine" evidence="15">
    <location>
        <position position="362"/>
    </location>
</feature>
<feature type="modified residue" description="N6-acetyllysine; by EP300" evidence="1">
    <location>
        <position position="380"/>
    </location>
</feature>
<feature type="modified residue" description="Phosphoserine" evidence="15">
    <location>
        <position position="405"/>
    </location>
</feature>
<feature type="mutagenesis site" description="Abolishes interaction with NCOR2; mice have impaired GC formation and immunoglobulin affinity maturation with lower proliferation and survival of GC B-cells but normal differentiation of helper T-cell subsets and inflammatory response; in macrophages, no effect on transcriptional repression of genes encoding inflammatory molecules; when associated with A-116. In macrophages, no effect on competition with STAT5 for DNA-binding and transcriptional repression of genes encoding inflammatory molecules; when associated with A-116 and 377-Q--Q-380." evidence="10 11">
    <original>N</original>
    <variation>K</variation>
    <location>
        <position position="21"/>
    </location>
</feature>
<feature type="mutagenesis site" description="Abolishes interaction with NCOR2; mice have impaired GC formation and immunoglobulin affinity maturation with lower proliferation and survival of GC B-cells but normal differentiation of helper T-cell subsets and inflammatory response; in macrophages, no effect on transcriptional repression of genes encoding inflammatory molecules; when associated with K-21. In macrophages, no effect on competition with STAT5 for DNA-binding and transcriptional repression of genes encoding inflammatory molecules; when associated with K-21 and 377-Q--Q-380." evidence="10 11">
    <original>H</original>
    <variation>A</variation>
    <location>
        <position position="116"/>
    </location>
</feature>
<feature type="mutagenesis site" description="In macrophages, no effect on transcriptional repression of genes encoding inflammatory molecules. In macrophages, no effect on competition with STAT5 for DNA-binding and transcriptional repression of genes encoding inflammatory molecules; when associated with K-21 and A-116." evidence="10">
    <original>KKYK</original>
    <variation>QQYQ</variation>
    <location>
        <begin position="377"/>
        <end position="380"/>
    </location>
</feature>
<feature type="mutagenesis site" description="In macrophages, inhibits competition with STAT5 for DNA-binding and abolishes transcriptional repression of genes encoding inflammatory molecules." evidence="10">
    <original>CNIC</original>
    <variation>GNIG</variation>
    <location>
        <begin position="577"/>
        <end position="580"/>
    </location>
</feature>
<feature type="sequence conflict" description="In Ref. 2; AAB17432." evidence="14" ref="2">
    <original>A</original>
    <variation>G</variation>
    <location>
        <position position="456"/>
    </location>
</feature>
<accession>P41183</accession>
<accession>Q61065</accession>
<organism>
    <name type="scientific">Mus musculus</name>
    <name type="common">Mouse</name>
    <dbReference type="NCBI Taxonomy" id="10090"/>
    <lineage>
        <taxon>Eukaryota</taxon>
        <taxon>Metazoa</taxon>
        <taxon>Chordata</taxon>
        <taxon>Craniata</taxon>
        <taxon>Vertebrata</taxon>
        <taxon>Euteleostomi</taxon>
        <taxon>Mammalia</taxon>
        <taxon>Eutheria</taxon>
        <taxon>Euarchontoglires</taxon>
        <taxon>Glires</taxon>
        <taxon>Rodentia</taxon>
        <taxon>Myomorpha</taxon>
        <taxon>Muroidea</taxon>
        <taxon>Muridae</taxon>
        <taxon>Murinae</taxon>
        <taxon>Mus</taxon>
        <taxon>Mus</taxon>
    </lineage>
</organism>
<gene>
    <name type="primary">Bcl6</name>
    <name type="synonym">Bcl-6</name>
</gene>
<proteinExistence type="evidence at protein level"/>
<protein>
    <recommendedName>
        <fullName>B-cell lymphoma 6 protein homolog</fullName>
    </recommendedName>
</protein>
<reference key="1">
    <citation type="journal article" date="1995" name="Oncogene">
        <title>The murine BCL6 gene is induced in activated lymphocytes as an immediate early gene.</title>
        <authorList>
            <person name="Fukuda T."/>
            <person name="Miki T."/>
            <person name="Yoshida T."/>
            <person name="Hatano M."/>
            <person name="Ohashi K."/>
            <person name="Hirosawa S."/>
            <person name="Tokuhisa T."/>
        </authorList>
    </citation>
    <scope>NUCLEOTIDE SEQUENCE [MRNA]</scope>
    <source>
        <strain>BALB/cJ</strain>
        <tissue>Skeletal muscle</tissue>
    </source>
</reference>
<reference key="2">
    <citation type="journal article" date="1996" name="Blood">
        <title>BCL-6 expression during B-cell activation.</title>
        <authorList>
            <person name="Allman D."/>
            <person name="Jain A."/>
            <person name="Dent A."/>
            <person name="Maile R.R."/>
            <person name="Selvaggi T."/>
            <person name="Kehry M.R."/>
            <person name="Staudt L.M."/>
        </authorList>
    </citation>
    <scope>NUCLEOTIDE SEQUENCE [MRNA]</scope>
    <source>
        <tissue>Muscle</tissue>
    </source>
</reference>
<reference key="3">
    <citation type="journal article" date="2004" name="Genome Res.">
        <title>The status, quality, and expansion of the NIH full-length cDNA project: the Mammalian Gene Collection (MGC).</title>
        <authorList>
            <consortium name="The MGC Project Team"/>
        </authorList>
    </citation>
    <scope>NUCLEOTIDE SEQUENCE [LARGE SCALE MRNA]</scope>
    <source>
        <tissue>Olfactory epithelium</tissue>
    </source>
</reference>
<reference key="4">
    <citation type="journal article" date="1998" name="Mol. Cell. Biol.">
        <title>BAZF, a novel Bcl6 homolog, functions as a transcriptional repressor.</title>
        <authorList>
            <person name="Okabe S."/>
            <person name="Fukuda T."/>
            <person name="Ishibashi K."/>
            <person name="Kojima S."/>
            <person name="Okada S."/>
            <person name="Hatano M."/>
            <person name="Ebara M."/>
            <person name="Saisho H."/>
            <person name="Tokuhisa T."/>
        </authorList>
    </citation>
    <scope>INTERACTION WITH BCL6B</scope>
</reference>
<reference key="5">
    <citation type="journal article" date="1999" name="Oncogene">
        <title>Novel BTB/POZ domain zinc-finger protein, LRF, is a potential target of the LAZ-3/BCL-6 oncogene.</title>
        <authorList>
            <person name="Davies J.M."/>
            <person name="Hawe N."/>
            <person name="Kabarowski J."/>
            <person name="Huang Q.-H."/>
            <person name="Zhu J."/>
            <person name="Brand N.J."/>
            <person name="Leprince D."/>
            <person name="Dhordain P."/>
            <person name="Cook M."/>
            <person name="Moriss-Kay G."/>
            <person name="Zelent A."/>
        </authorList>
    </citation>
    <scope>INTERACTION WITH ZBTB7</scope>
    <scope>SUBCELLULAR LOCATION</scope>
</reference>
<reference key="6">
    <citation type="journal article" date="2000" name="Immunity">
        <title>BCL-6 represses genes that function in lymphocyte differentiation, inflammation, and cell cycle control.</title>
        <authorList>
            <person name="Shaffer A.L."/>
            <person name="Yu X."/>
            <person name="He Y."/>
            <person name="Boldrick J."/>
            <person name="Chan E.P."/>
            <person name="Staudt L.M."/>
        </authorList>
    </citation>
    <scope>FUNCTION AS TRANSCRIPTIONAL REPRESSOR</scope>
    <scope>DISRUPTION PHENOTYPE</scope>
</reference>
<reference key="7">
    <citation type="journal article" date="2002" name="Nat. Immunol.">
        <title>Role for Bcl-6 in the generation and maintenance of memory CD8+ T-cells.</title>
        <authorList>
            <person name="Ichii H."/>
            <person name="Sakamoto A."/>
            <person name="Hatano M."/>
            <person name="Okada S."/>
            <person name="Toyama H."/>
            <person name="Taki S."/>
            <person name="Arima M."/>
            <person name="Kuroda Y."/>
            <person name="Tokuhisa T."/>
        </authorList>
    </citation>
    <scope>FUNCTION IN MEMORY CD8(+) T-CELL MAINTENANCE</scope>
    <scope>DISRUPTION PHENOTYPE</scope>
</reference>
<reference key="8">
    <citation type="journal article" date="2007" name="Nat. Immunol.">
        <title>Genotoxic stress regulates expression of the proto-oncogene Bcl6 in germinal center B cells.</title>
        <authorList>
            <person name="Phan R.T."/>
            <person name="Saito M."/>
            <person name="Kitagawa Y."/>
            <person name="Means A.R."/>
            <person name="Dalla-Favera R."/>
        </authorList>
    </citation>
    <scope>TISSUE SPECIFICITY</scope>
</reference>
<reference key="9">
    <citation type="journal article" date="2010" name="Cell">
        <title>A tissue-specific atlas of mouse protein phosphorylation and expression.</title>
        <authorList>
            <person name="Huttlin E.L."/>
            <person name="Jedrychowski M.P."/>
            <person name="Elias J.E."/>
            <person name="Goswami T."/>
            <person name="Rad R."/>
            <person name="Beausoleil S.A."/>
            <person name="Villen J."/>
            <person name="Haas W."/>
            <person name="Sowa M.E."/>
            <person name="Gygi S.P."/>
        </authorList>
    </citation>
    <scope>PHOSPHORYLATION [LARGE SCALE ANALYSIS] AT SER-334; SER-362 AND SER-405</scope>
    <scope>IDENTIFICATION BY MASS SPECTROMETRY [LARGE SCALE ANALYSIS]</scope>
    <source>
        <tissue>Brown adipose tissue</tissue>
        <tissue>Kidney</tissue>
        <tissue>Lung</tissue>
        <tissue>Spleen</tissue>
    </source>
</reference>
<reference key="10">
    <citation type="journal article" date="2012" name="J. Exp. Med.">
        <title>BCL6 positively regulates AID and germinal center gene expression via repression of miR-155.</title>
        <authorList>
            <person name="Basso K."/>
            <person name="Schneider C."/>
            <person name="Shen Q."/>
            <person name="Holmes A.B."/>
            <person name="Setty M."/>
            <person name="Leslie C."/>
            <person name="Dalla-Favera R."/>
        </authorList>
    </citation>
    <scope>FUNCTION IN MIRNA REGULATION</scope>
    <scope>TISSUE SPECIFICITY</scope>
</reference>
<reference key="11">
    <citation type="journal article" date="2012" name="Nat. Neurosci.">
        <title>BCL6 controls neurogenesis through Sirt1-dependent epigenetic repression of selective Notch targets.</title>
        <authorList>
            <person name="Tiberi L."/>
            <person name="van den Ameele J."/>
            <person name="Dimidschstein J."/>
            <person name="Piccirilli J."/>
            <person name="Gall D."/>
            <person name="Herpoel A."/>
            <person name="Bilheu A."/>
            <person name="Bonnefont J."/>
            <person name="Iacovino M."/>
            <person name="Kyba M."/>
            <person name="Bouschet T."/>
            <person name="Vanderhaeghen P."/>
        </authorList>
    </citation>
    <scope>FUNCTION IN NEUROGENESIS</scope>
    <scope>INTERACTION WITH NOTCH1 AND SIRT1</scope>
    <scope>DEVELOPMENTAL STAGE</scope>
    <scope>DISRUPTION PHENOTYPE</scope>
</reference>
<reference key="12">
    <citation type="journal article" date="2013" name="Cell Rep.">
        <title>A hybrid mechanism of action for BCL6 in B cells defined by formation of functionally distinct complexes at enhancers and promoters.</title>
        <authorList>
            <person name="Hatzi K."/>
            <person name="Jiang Y."/>
            <person name="Huang C."/>
            <person name="Garrett-Bakelman F."/>
            <person name="Gearhart M.D."/>
            <person name="Giannopoulou E.G."/>
            <person name="Zumbo P."/>
            <person name="Kirouac K."/>
            <person name="Bhaskara S."/>
            <person name="Polo J.M."/>
            <person name="Kormaksson M."/>
            <person name="Mackerell A.D. Jr."/>
            <person name="Xue F."/>
            <person name="Mason C.E."/>
            <person name="Hiebert S.W."/>
            <person name="Prive G.G."/>
            <person name="Cerchietti L."/>
            <person name="Bardwell V.J."/>
            <person name="Elemento O."/>
            <person name="Melnick A."/>
        </authorList>
    </citation>
    <scope>MUTAGENESIS OF ASN-21 AND HIS-116</scope>
</reference>
<reference key="13">
    <citation type="journal article" date="2013" name="Nat. Immunol.">
        <title>Lineage-specific functions of Bcl-6 in immunity and inflammation are mediated by distinct biochemical mechanisms.</title>
        <authorList>
            <person name="Huang C."/>
            <person name="Hatzi K."/>
            <person name="Melnick A."/>
        </authorList>
    </citation>
    <scope>FUNCTION IN GERMINAL CENTER REACTIONS</scope>
    <scope>DNA-BINDING</scope>
    <scope>DOMAIN</scope>
    <scope>INTERACTION WITH SMRT</scope>
    <scope>DISRUPTION PHENOTYPE</scope>
    <scope>MUTAGENESIS OF ASN-21; HIS-116; 377-LYS--LYS-380 AND 577-CYS--CYS-580</scope>
</reference>
<sequence>MASPADSCIQFTRHASDVLLNLNRLRSRDILTDVVIVVSREQFRAHKTVLMACSGLFYSIFTDQLKCNLSVINLDPEISPEGFCILLDFMYTSRLNLREGNIMAVMTTAMYLQMEHVVDTCRKFIKASEAEMAPALKPPREEFLNSRMLMPHDIMAYRGREVVENNMPLRNTPGCESRAFAPPLYSGLSTPPASYPMYSHLPLSTFLFSDEELRDAPRMPVANPFPKERALPCDSARQVPNEYSRPAMEVSPSLCHSNIYSPKEAVPEEARSDIHYSVPEGPKPAVPSARNAPYFPCDKASKEEERPSSEDEIALHFEPPNAPLNRKGLVSPQSPQKSDCQPNSPTESCSSKNACILQASGSPPAKSPTDPKACNWKKYKFIVLNSLNQNAKPEGSEQAELGRLSPRAYPAPPACQPPMEPANLDLQSPTKLSASGEDSTIPQASRLNNLVNRSLAGSPRSSSESHSPLYMHPPKCTSCGSQSPQHTEMCLHTAGPTFPEEMGETQSEYSDSSCENGTFFCNECDCRFSEEASLKRHTLQTHSDKPYKCDRCQASFRYKGNLASHKTVHTGEKPYRCNICGAQFNRPANLKTHTRIHSGEKPYKCETCGARFVQVAHLRAHVLIHTGEKPYPCEICGTRFRHLQTLKSHLRIHTGEKPYHCEKCNLHFRHKSQLRLHLRQKHGAITNTKVQYRVSAADLPPELPKAC</sequence>
<comment type="function">
    <text evidence="5 6 8 9 10">Transcriptional repressor mainly required for germinal center (GC) formation and antibody affinity maturation which has different mechanisms of action specific to the lineage and biological functions. Forms complexes with different corepressors and histone deacetylases to repress the transcriptional expression of different subsets of target genes. Represses its target genes by binding directly to the DNA sequence 5'-TTCCTAGAA-3' (BCL6-binding site) or indirectly by repressing the transcriptional activity of transcription factors. In GC B-cells, represses genes that function in differentiation, inflammation, apoptosis and cell cycle control, also autoregulates its transcriptional expression and up-regulates, indirectly, the expression of some genes important for GC reactions, such as AICDA, through the repression of microRNAs expression, like miR155. An important function is to allow GC B-cells to proliferate very rapidly in response to T-cell dependent antigens and tolerate the physiological DNA breaks required for immunglobulin class switch recombination and somatic hypermutation without inducing a p53/TP53-dependent apoptotic response. In follicular helper CD4(+) T-cells (T(FH) cells), promotes the expression of T(FH)-related genes but inhibits the differentiation of T(H)1, T(H)2 and T(H)17 cells. Also required for the establishment and maintenance of immunological memory for both T- and B-cells. Suppresses macrophage proliferation through competition with STAT5 for STAT-binding motifs binding on certain target genes, such as CCL2 and CCND2. In response to genotoxic stress, controls cell cycle arrest in GC B-cells in both p53/TP53-dependedent and -independent manners. Besides, also controls neurogenesis through the alteration of the composition of NOTCH-dependent transcriptional complexes at selective NOTCH targets, such as HES5, including the recruitment of the deacetylase SIRT1 and resulting in an epigenetic silencing leading to neuronal differentiation.</text>
</comment>
<comment type="subunit">
    <text evidence="8 10 12 13">Homodimer. Interacts (via BTB domain) with the corepressors BCOR, NCOR1 and SMRT/NCOR2; the interactions are direct. Forms preferably ternary complexes with BCOR and SMRT/NCOR2 on target gene promoters but, on enhancer elements, interacts with SMRT/NCOR2 and HDAC3 to repress proximal gene expression. Interacts with histone deacetylases HDAC2, HDAC5 and HDAC9 (via the catalytic domain). Interacts with ZBTB7 and BCL6B. Interacts with SCF(FBXO11) complex; the interaction is independent of phosphorylation and promotes ubiquitination. Interacts (when phosphorylated) with PIN1; the interaction is required for BCL6 degradation upon genotoxic stress. Interacts with ZBTB17; inhibits ZBTB17 transcriptional activity. Interacts with CTBP1, autoinhibits its transcriptional expression. Interacts with NOTCH1 NCID and SIRT1; leads to a epigenetic repression of selective NOTCH1-target genes. Interacts (nor via BTB domain neither acetylated) with the NuRD complex components CHD4, HDAC1, MBD3 and MTA3; the interaction with MTA3 inhibits BCL6 acetylation and is required for BCL6 transpriptional repression.</text>
</comment>
<comment type="interaction">
    <interactant intactId="EBI-6253762">
        <id>P41183</id>
    </interactant>
    <interactant intactId="EBI-1216174">
        <id>Q8CGN4</id>
        <label>Bcor</label>
    </interactant>
    <organismsDiffer>false</organismsDiffer>
    <experiments>2</experiments>
</comment>
<comment type="interaction">
    <interactant intactId="EBI-6253762">
        <id>P41183</id>
    </interactant>
    <interactant intactId="EBI-15955324">
        <id>Q7TPD1</id>
        <label>Fbxo11</label>
    </interactant>
    <organismsDiffer>false</organismsDiffer>
    <experiments>2</experiments>
</comment>
<comment type="interaction">
    <interactant intactId="EBI-6253762">
        <id>P41183</id>
    </interactant>
    <interactant intactId="EBI-3863870">
        <id>Q9JKD8</id>
        <label>Tbx21</label>
    </interactant>
    <organismsDiffer>false</organismsDiffer>
    <experiments>3</experiments>
</comment>
<comment type="subcellular location">
    <subcellularLocation>
        <location evidence="13">Nucleus</location>
    </subcellularLocation>
</comment>
<comment type="tissue specificity">
    <text evidence="7 9">Expressed at least in germinal center B-cells of spleen.</text>
</comment>
<comment type="developmental stage">
    <text evidence="8">Detected in the cerebral cortex from 12.5 dpc until birth, with highest levels in the frontal and parietal parts of the neocortex than the occipital parts.</text>
</comment>
<comment type="domain">
    <text evidence="10">Interaction with corepressors through the BTB domain is needed to facilitate the rapid proliferation and survival of GC B-cells but is not involved in the T(FH) formation and BCL6-mediated suppression of T(H)2 and T(H)17 differentiation required for GC formation.</text>
</comment>
<comment type="PTM">
    <text evidence="1">Phosphorylated by MAPK1 in response to antigen receptor activation at Ser-334 and Ser-344. Phosphorylated by ATM in response to genotoxic stress. Phosphorylation induces its degradation by ubiquitin/proteasome pathway.</text>
</comment>
<comment type="PTM">
    <text evidence="1">Polyubiquitinated. Polyubiquitinated by SCF(FBXO11), leading to its degradation by the proteasome. Ubiquitinated by the SCF(FBXL17) complex, leading to its degradation by the proteasome: ubiquitination by the SCF(FBXL17) complex takes place when aberrant BTB domain dimers are formed.</text>
</comment>
<comment type="PTM">
    <text evidence="1">Acetylated at Lys-380 by EP300 which inhibits the interaction with NuRD complex and the transcriptional repressor function. Deacetylated by HDAC- and SIR2-dependent pathways.</text>
</comment>
<comment type="disruption phenotype">
    <text evidence="5 6 8 10">More than 50% of lethality by 6 weeks of age. Mice have infiltrates of inflammatory cells in their lungs, as well as multinodular lesions with eosinophil infiltrations into the spleen, significantly more T(H)2 and T(H)17 cells and up-regulated levels of inflammtaroy chemokines in macrophages, but, express low levels of memory CD8(+) T-cells and, in spleen, GC B and T(FH) cells are both undetectable. B-cells express 10-fold lower levels of surface IgM than control littermates and macrophages divide faster. From 12.5 dpc to at least 21 days after birth, animals have reduced size of the cerebral hemispheres and a reduced thickness of the frontal and parietal cortex with all the cortical layers affected. At 12.5 and 15.5 dpc, marked reduction of cell-cycle exit indicating defective transition from neural progenitor Cells to postmitotic neurons.</text>
</comment>
<dbReference type="EMBL" id="D38377">
    <property type="protein sequence ID" value="BAA07456.1"/>
    <property type="molecule type" value="mRNA"/>
</dbReference>
<dbReference type="EMBL" id="U41465">
    <property type="protein sequence ID" value="AAB17432.1"/>
    <property type="molecule type" value="mRNA"/>
</dbReference>
<dbReference type="EMBL" id="BC052315">
    <property type="protein sequence ID" value="AAH52315.1"/>
    <property type="molecule type" value="mRNA"/>
</dbReference>
<dbReference type="CCDS" id="CCDS28082.1"/>
<dbReference type="RefSeq" id="NP_001334955.1">
    <property type="nucleotide sequence ID" value="NM_001348026.2"/>
</dbReference>
<dbReference type="RefSeq" id="NP_001403537.1">
    <property type="nucleotide sequence ID" value="NM_001416608.1"/>
</dbReference>
<dbReference type="RefSeq" id="NP_033874.1">
    <property type="nucleotide sequence ID" value="NM_009744.5"/>
</dbReference>
<dbReference type="RefSeq" id="XP_017172344.1">
    <property type="nucleotide sequence ID" value="XM_017316855.1"/>
</dbReference>
<dbReference type="SMR" id="P41183"/>
<dbReference type="BioGRID" id="198327">
    <property type="interactions" value="9"/>
</dbReference>
<dbReference type="DIP" id="DIP-59432N"/>
<dbReference type="FunCoup" id="P41183">
    <property type="interactions" value="2332"/>
</dbReference>
<dbReference type="IntAct" id="P41183">
    <property type="interactions" value="4"/>
</dbReference>
<dbReference type="STRING" id="10090.ENSMUSP00000023151"/>
<dbReference type="GlyGen" id="P41183">
    <property type="glycosylation" value="1 site, 1 O-linked glycan (1 site)"/>
</dbReference>
<dbReference type="iPTMnet" id="P41183"/>
<dbReference type="PhosphoSitePlus" id="P41183"/>
<dbReference type="jPOST" id="P41183"/>
<dbReference type="PaxDb" id="10090-ENSMUSP00000023151"/>
<dbReference type="ProteomicsDB" id="273479"/>
<dbReference type="Antibodypedia" id="1434">
    <property type="antibodies" value="1245 antibodies from 51 providers"/>
</dbReference>
<dbReference type="DNASU" id="12053"/>
<dbReference type="Ensembl" id="ENSMUST00000023151.6">
    <property type="protein sequence ID" value="ENSMUSP00000023151.6"/>
    <property type="gene ID" value="ENSMUSG00000022508.6"/>
</dbReference>
<dbReference type="GeneID" id="12053"/>
<dbReference type="KEGG" id="mmu:12053"/>
<dbReference type="UCSC" id="uc007ytz.1">
    <property type="organism name" value="mouse"/>
</dbReference>
<dbReference type="AGR" id="MGI:107187"/>
<dbReference type="CTD" id="604"/>
<dbReference type="MGI" id="MGI:107187">
    <property type="gene designation" value="Bcl6"/>
</dbReference>
<dbReference type="VEuPathDB" id="HostDB:ENSMUSG00000022508"/>
<dbReference type="eggNOG" id="KOG1721">
    <property type="taxonomic scope" value="Eukaryota"/>
</dbReference>
<dbReference type="GeneTree" id="ENSGT00940000156311"/>
<dbReference type="HOGENOM" id="CLU_024196_1_0_1"/>
<dbReference type="InParanoid" id="P41183"/>
<dbReference type="OMA" id="DARMPMA"/>
<dbReference type="OrthoDB" id="5560627at2759"/>
<dbReference type="PhylomeDB" id="P41183"/>
<dbReference type="TreeFam" id="TF330912"/>
<dbReference type="BioGRID-ORCS" id="12053">
    <property type="hits" value="3 hits in 118 CRISPR screens"/>
</dbReference>
<dbReference type="ChiTaRS" id="Bcl6">
    <property type="organism name" value="mouse"/>
</dbReference>
<dbReference type="PRO" id="PR:P41183"/>
<dbReference type="Proteomes" id="UP000000589">
    <property type="component" value="Chromosome 16"/>
</dbReference>
<dbReference type="RNAct" id="P41183">
    <property type="molecule type" value="protein"/>
</dbReference>
<dbReference type="Bgee" id="ENSMUSG00000022508">
    <property type="expression patterns" value="Expressed in facial nucleus and 252 other cell types or tissues"/>
</dbReference>
<dbReference type="ExpressionAtlas" id="P41183">
    <property type="expression patterns" value="baseline and differential"/>
</dbReference>
<dbReference type="GO" id="GO:0005794">
    <property type="term" value="C:Golgi apparatus"/>
    <property type="evidence" value="ECO:0007669"/>
    <property type="project" value="Ensembl"/>
</dbReference>
<dbReference type="GO" id="GO:0005730">
    <property type="term" value="C:nucleolus"/>
    <property type="evidence" value="ECO:0007669"/>
    <property type="project" value="Ensembl"/>
</dbReference>
<dbReference type="GO" id="GO:0005634">
    <property type="term" value="C:nucleus"/>
    <property type="evidence" value="ECO:0000314"/>
    <property type="project" value="MGI"/>
</dbReference>
<dbReference type="GO" id="GO:0042382">
    <property type="term" value="C:paraspeckles"/>
    <property type="evidence" value="ECO:0007669"/>
    <property type="project" value="Ensembl"/>
</dbReference>
<dbReference type="GO" id="GO:0005657">
    <property type="term" value="C:replication fork"/>
    <property type="evidence" value="ECO:0007669"/>
    <property type="project" value="Ensembl"/>
</dbReference>
<dbReference type="GO" id="GO:0003682">
    <property type="term" value="F:chromatin binding"/>
    <property type="evidence" value="ECO:0000314"/>
    <property type="project" value="MGI"/>
</dbReference>
<dbReference type="GO" id="GO:0031490">
    <property type="term" value="F:chromatin DNA binding"/>
    <property type="evidence" value="ECO:0000314"/>
    <property type="project" value="MGI"/>
</dbReference>
<dbReference type="GO" id="GO:0140297">
    <property type="term" value="F:DNA-binding transcription factor binding"/>
    <property type="evidence" value="ECO:0007669"/>
    <property type="project" value="Ensembl"/>
</dbReference>
<dbReference type="GO" id="GO:0001227">
    <property type="term" value="F:DNA-binding transcription repressor activity, RNA polymerase II-specific"/>
    <property type="evidence" value="ECO:0000314"/>
    <property type="project" value="NTNU_SB"/>
</dbReference>
<dbReference type="GO" id="GO:0042802">
    <property type="term" value="F:identical protein binding"/>
    <property type="evidence" value="ECO:0007669"/>
    <property type="project" value="Ensembl"/>
</dbReference>
<dbReference type="GO" id="GO:0001161">
    <property type="term" value="F:intronic transcription regulatory region sequence-specific DNA binding"/>
    <property type="evidence" value="ECO:0000314"/>
    <property type="project" value="MGI"/>
</dbReference>
<dbReference type="GO" id="GO:0000978">
    <property type="term" value="F:RNA polymerase II cis-regulatory region sequence-specific DNA binding"/>
    <property type="evidence" value="ECO:0000314"/>
    <property type="project" value="MGI"/>
</dbReference>
<dbReference type="GO" id="GO:0000977">
    <property type="term" value="F:RNA polymerase II transcription regulatory region sequence-specific DNA binding"/>
    <property type="evidence" value="ECO:0000314"/>
    <property type="project" value="NTNU_SB"/>
</dbReference>
<dbReference type="GO" id="GO:0043565">
    <property type="term" value="F:sequence-specific DNA binding"/>
    <property type="evidence" value="ECO:0000314"/>
    <property type="project" value="MGI"/>
</dbReference>
<dbReference type="GO" id="GO:0001222">
    <property type="term" value="F:transcription corepressor binding"/>
    <property type="evidence" value="ECO:0007669"/>
    <property type="project" value="Ensembl"/>
</dbReference>
<dbReference type="GO" id="GO:0008270">
    <property type="term" value="F:zinc ion binding"/>
    <property type="evidence" value="ECO:0007669"/>
    <property type="project" value="UniProtKB-KW"/>
</dbReference>
<dbReference type="GO" id="GO:0030036">
    <property type="term" value="P:actin cytoskeleton organization"/>
    <property type="evidence" value="ECO:0000315"/>
    <property type="project" value="MGI"/>
</dbReference>
<dbReference type="GO" id="GO:0030183">
    <property type="term" value="P:B cell differentiation"/>
    <property type="evidence" value="ECO:0000316"/>
    <property type="project" value="MGI"/>
</dbReference>
<dbReference type="GO" id="GO:0042100">
    <property type="term" value="P:B cell proliferation"/>
    <property type="evidence" value="ECO:0000315"/>
    <property type="project" value="MGI"/>
</dbReference>
<dbReference type="GO" id="GO:0000902">
    <property type="term" value="P:cell morphogenesis"/>
    <property type="evidence" value="ECO:0000315"/>
    <property type="project" value="MGI"/>
</dbReference>
<dbReference type="GO" id="GO:0048870">
    <property type="term" value="P:cell motility"/>
    <property type="evidence" value="ECO:0000315"/>
    <property type="project" value="MGI"/>
</dbReference>
<dbReference type="GO" id="GO:0008283">
    <property type="term" value="P:cell population proliferation"/>
    <property type="evidence" value="ECO:0000315"/>
    <property type="project" value="MGI"/>
</dbReference>
<dbReference type="GO" id="GO:0007160">
    <property type="term" value="P:cell-matrix adhesion"/>
    <property type="evidence" value="ECO:0000315"/>
    <property type="project" value="MGI"/>
</dbReference>
<dbReference type="GO" id="GO:0006974">
    <property type="term" value="P:DNA damage response"/>
    <property type="evidence" value="ECO:0007669"/>
    <property type="project" value="Ensembl"/>
</dbReference>
<dbReference type="GO" id="GO:0048821">
    <property type="term" value="P:erythrocyte development"/>
    <property type="evidence" value="ECO:0000315"/>
    <property type="project" value="MGI"/>
</dbReference>
<dbReference type="GO" id="GO:0002467">
    <property type="term" value="P:germinal center formation"/>
    <property type="evidence" value="ECO:0000315"/>
    <property type="project" value="MGI"/>
</dbReference>
<dbReference type="GO" id="GO:0031507">
    <property type="term" value="P:heterochromatin formation"/>
    <property type="evidence" value="ECO:0000316"/>
    <property type="project" value="MGI"/>
</dbReference>
<dbReference type="GO" id="GO:0006954">
    <property type="term" value="P:inflammatory response"/>
    <property type="evidence" value="ECO:0007669"/>
    <property type="project" value="UniProtKB-KW"/>
</dbReference>
<dbReference type="GO" id="GO:0048289">
    <property type="term" value="P:isotype switching to IgE isotypes"/>
    <property type="evidence" value="ECO:0000315"/>
    <property type="project" value="MGI"/>
</dbReference>
<dbReference type="GO" id="GO:0032943">
    <property type="term" value="P:mononuclear cell proliferation"/>
    <property type="evidence" value="ECO:0000315"/>
    <property type="project" value="MGI"/>
</dbReference>
<dbReference type="GO" id="GO:0043066">
    <property type="term" value="P:negative regulation of apoptotic process"/>
    <property type="evidence" value="ECO:0000314"/>
    <property type="project" value="MGI"/>
</dbReference>
<dbReference type="GO" id="GO:0030308">
    <property type="term" value="P:negative regulation of cell growth"/>
    <property type="evidence" value="ECO:0007669"/>
    <property type="project" value="Ensembl"/>
</dbReference>
<dbReference type="GO" id="GO:0001953">
    <property type="term" value="P:negative regulation of cell-matrix adhesion"/>
    <property type="evidence" value="ECO:0000315"/>
    <property type="project" value="MGI"/>
</dbReference>
<dbReference type="GO" id="GO:2000773">
    <property type="term" value="P:negative regulation of cellular senescence"/>
    <property type="evidence" value="ECO:0000315"/>
    <property type="project" value="MGI"/>
</dbReference>
<dbReference type="GO" id="GO:0048294">
    <property type="term" value="P:negative regulation of isotype switching to IgE isotypes"/>
    <property type="evidence" value="ECO:0000315"/>
    <property type="project" value="MGI"/>
</dbReference>
<dbReference type="GO" id="GO:0032764">
    <property type="term" value="P:negative regulation of mast cell cytokine production"/>
    <property type="evidence" value="ECO:0000315"/>
    <property type="project" value="MGI"/>
</dbReference>
<dbReference type="GO" id="GO:0032945">
    <property type="term" value="P:negative regulation of mononuclear cell proliferation"/>
    <property type="evidence" value="ECO:0000315"/>
    <property type="project" value="MGI"/>
</dbReference>
<dbReference type="GO" id="GO:0045746">
    <property type="term" value="P:negative regulation of Notch signaling pathway"/>
    <property type="evidence" value="ECO:0000316"/>
    <property type="project" value="MGI"/>
</dbReference>
<dbReference type="GO" id="GO:1900099">
    <property type="term" value="P:negative regulation of plasma cell differentiation"/>
    <property type="evidence" value="ECO:0000315"/>
    <property type="project" value="MGI"/>
</dbReference>
<dbReference type="GO" id="GO:0035024">
    <property type="term" value="P:negative regulation of Rho protein signal transduction"/>
    <property type="evidence" value="ECO:0000315"/>
    <property type="project" value="MGI"/>
</dbReference>
<dbReference type="GO" id="GO:0045629">
    <property type="term" value="P:negative regulation of T-helper 2 cell differentiation"/>
    <property type="evidence" value="ECO:0000316"/>
    <property type="project" value="MGI"/>
</dbReference>
<dbReference type="GO" id="GO:0000122">
    <property type="term" value="P:negative regulation of transcription by RNA polymerase II"/>
    <property type="evidence" value="ECO:0000314"/>
    <property type="project" value="NTNU_SB"/>
</dbReference>
<dbReference type="GO" id="GO:0002829">
    <property type="term" value="P:negative regulation of type 2 immune response"/>
    <property type="evidence" value="ECO:0000316"/>
    <property type="project" value="MGI"/>
</dbReference>
<dbReference type="GO" id="GO:0002317">
    <property type="term" value="P:plasma cell differentiation"/>
    <property type="evidence" value="ECO:0000315"/>
    <property type="project" value="MGI"/>
</dbReference>
<dbReference type="GO" id="GO:0043065">
    <property type="term" value="P:positive regulation of apoptotic process"/>
    <property type="evidence" value="ECO:0007669"/>
    <property type="project" value="Ensembl"/>
</dbReference>
<dbReference type="GO" id="GO:0030890">
    <property type="term" value="P:positive regulation of B cell proliferation"/>
    <property type="evidence" value="ECO:0000315"/>
    <property type="project" value="MGI"/>
</dbReference>
<dbReference type="GO" id="GO:2000147">
    <property type="term" value="P:positive regulation of cell motility"/>
    <property type="evidence" value="ECO:0000315"/>
    <property type="project" value="MGI"/>
</dbReference>
<dbReference type="GO" id="GO:0045666">
    <property type="term" value="P:positive regulation of neuron differentiation"/>
    <property type="evidence" value="ECO:0000314"/>
    <property type="project" value="MGI"/>
</dbReference>
<dbReference type="GO" id="GO:0045591">
    <property type="term" value="P:positive regulation of regulatory T cell differentiation"/>
    <property type="evidence" value="ECO:0007669"/>
    <property type="project" value="Ensembl"/>
</dbReference>
<dbReference type="GO" id="GO:0008104">
    <property type="term" value="P:protein localization"/>
    <property type="evidence" value="ECO:0000315"/>
    <property type="project" value="MGI"/>
</dbReference>
<dbReference type="GO" id="GO:0021859">
    <property type="term" value="P:pyramidal neuron differentiation"/>
    <property type="evidence" value="ECO:0000314"/>
    <property type="project" value="MGI"/>
</dbReference>
<dbReference type="GO" id="GO:0050727">
    <property type="term" value="P:regulation of inflammatory response"/>
    <property type="evidence" value="ECO:0000315"/>
    <property type="project" value="MGI"/>
</dbReference>
<dbReference type="GO" id="GO:0043380">
    <property type="term" value="P:regulation of memory T cell differentiation"/>
    <property type="evidence" value="ECO:0000315"/>
    <property type="project" value="MGI"/>
</dbReference>
<dbReference type="GO" id="GO:0042129">
    <property type="term" value="P:regulation of T cell proliferation"/>
    <property type="evidence" value="ECO:0000315"/>
    <property type="project" value="MGI"/>
</dbReference>
<dbReference type="GO" id="GO:0006357">
    <property type="term" value="P:regulation of transcription by RNA polymerase II"/>
    <property type="evidence" value="ECO:0000316"/>
    <property type="project" value="MGI"/>
</dbReference>
<dbReference type="GO" id="GO:0007266">
    <property type="term" value="P:Rho protein signal transduction"/>
    <property type="evidence" value="ECO:0000315"/>
    <property type="project" value="MGI"/>
</dbReference>
<dbReference type="GO" id="GO:0007283">
    <property type="term" value="P:spermatogenesis"/>
    <property type="evidence" value="ECO:0000315"/>
    <property type="project" value="MGI"/>
</dbReference>
<dbReference type="GO" id="GO:0045064">
    <property type="term" value="P:T-helper 2 cell differentiation"/>
    <property type="evidence" value="ECO:0000316"/>
    <property type="project" value="MGI"/>
</dbReference>
<dbReference type="GO" id="GO:0006366">
    <property type="term" value="P:transcription by RNA polymerase II"/>
    <property type="evidence" value="ECO:0000314"/>
    <property type="project" value="MGI"/>
</dbReference>
<dbReference type="GO" id="GO:0042092">
    <property type="term" value="P:type 2 immune response"/>
    <property type="evidence" value="ECO:0000315"/>
    <property type="project" value="MGI"/>
</dbReference>
<dbReference type="CDD" id="cd18331">
    <property type="entry name" value="BTB_POZ_ZBTB27_BCL6"/>
    <property type="match status" value="1"/>
</dbReference>
<dbReference type="FunFam" id="3.30.160.60:FF:000105">
    <property type="entry name" value="B-cell CLL/lymphoma 6, member B"/>
    <property type="match status" value="2"/>
</dbReference>
<dbReference type="FunFam" id="3.30.160.60:FF:000289">
    <property type="entry name" value="B-cell CLL/lymphoma 6, member B"/>
    <property type="match status" value="1"/>
</dbReference>
<dbReference type="FunFam" id="3.30.160.60:FF:000457">
    <property type="entry name" value="B-cell lymphoma 6 protein-like"/>
    <property type="match status" value="1"/>
</dbReference>
<dbReference type="FunFam" id="3.30.160.60:FF:000468">
    <property type="entry name" value="B-cell lymphoma 6 protein-like"/>
    <property type="match status" value="1"/>
</dbReference>
<dbReference type="FunFam" id="3.30.710.10:FF:000025">
    <property type="entry name" value="B-cell lymphoma 6 protein-like"/>
    <property type="match status" value="1"/>
</dbReference>
<dbReference type="FunFam" id="3.30.160.60:FF:001790">
    <property type="entry name" value="BCL6A, transcription repressor a"/>
    <property type="match status" value="1"/>
</dbReference>
<dbReference type="Gene3D" id="3.30.160.60">
    <property type="entry name" value="Classic Zinc Finger"/>
    <property type="match status" value="6"/>
</dbReference>
<dbReference type="Gene3D" id="3.30.710.10">
    <property type="entry name" value="Potassium Channel Kv1.1, Chain A"/>
    <property type="match status" value="1"/>
</dbReference>
<dbReference type="InterPro" id="IPR000210">
    <property type="entry name" value="BTB/POZ_dom"/>
</dbReference>
<dbReference type="InterPro" id="IPR011333">
    <property type="entry name" value="SKP1/BTB/POZ_sf"/>
</dbReference>
<dbReference type="InterPro" id="IPR036236">
    <property type="entry name" value="Znf_C2H2_sf"/>
</dbReference>
<dbReference type="InterPro" id="IPR013087">
    <property type="entry name" value="Znf_C2H2_type"/>
</dbReference>
<dbReference type="PANTHER" id="PTHR24394:SF36">
    <property type="entry name" value="B-CELL LYMPHOMA 6 PROTEIN ISOFORM X1"/>
    <property type="match status" value="1"/>
</dbReference>
<dbReference type="PANTHER" id="PTHR24394">
    <property type="entry name" value="ZINC FINGER PROTEIN"/>
    <property type="match status" value="1"/>
</dbReference>
<dbReference type="Pfam" id="PF00651">
    <property type="entry name" value="BTB"/>
    <property type="match status" value="1"/>
</dbReference>
<dbReference type="Pfam" id="PF00096">
    <property type="entry name" value="zf-C2H2"/>
    <property type="match status" value="4"/>
</dbReference>
<dbReference type="SMART" id="SM00225">
    <property type="entry name" value="BTB"/>
    <property type="match status" value="1"/>
</dbReference>
<dbReference type="SMART" id="SM00355">
    <property type="entry name" value="ZnF_C2H2"/>
    <property type="match status" value="6"/>
</dbReference>
<dbReference type="SUPFAM" id="SSF57667">
    <property type="entry name" value="beta-beta-alpha zinc fingers"/>
    <property type="match status" value="4"/>
</dbReference>
<dbReference type="SUPFAM" id="SSF54695">
    <property type="entry name" value="POZ domain"/>
    <property type="match status" value="1"/>
</dbReference>
<dbReference type="PROSITE" id="PS50097">
    <property type="entry name" value="BTB"/>
    <property type="match status" value="1"/>
</dbReference>
<dbReference type="PROSITE" id="PS00028">
    <property type="entry name" value="ZINC_FINGER_C2H2_1"/>
    <property type="match status" value="6"/>
</dbReference>
<dbReference type="PROSITE" id="PS50157">
    <property type="entry name" value="ZINC_FINGER_C2H2_2"/>
    <property type="match status" value="6"/>
</dbReference>
<name>BCL6_MOUSE</name>
<evidence type="ECO:0000250" key="1">
    <source>
        <dbReference type="UniProtKB" id="P41182"/>
    </source>
</evidence>
<evidence type="ECO:0000255" key="2">
    <source>
        <dbReference type="PROSITE-ProRule" id="PRU00037"/>
    </source>
</evidence>
<evidence type="ECO:0000255" key="3">
    <source>
        <dbReference type="PROSITE-ProRule" id="PRU00042"/>
    </source>
</evidence>
<evidence type="ECO:0000256" key="4">
    <source>
        <dbReference type="SAM" id="MobiDB-lite"/>
    </source>
</evidence>
<evidence type="ECO:0000269" key="5">
    <source>
    </source>
</evidence>
<evidence type="ECO:0000269" key="6">
    <source>
    </source>
</evidence>
<evidence type="ECO:0000269" key="7">
    <source>
    </source>
</evidence>
<evidence type="ECO:0000269" key="8">
    <source>
    </source>
</evidence>
<evidence type="ECO:0000269" key="9">
    <source>
    </source>
</evidence>
<evidence type="ECO:0000269" key="10">
    <source>
    </source>
</evidence>
<evidence type="ECO:0000269" key="11">
    <source>
    </source>
</evidence>
<evidence type="ECO:0000269" key="12">
    <source>
    </source>
</evidence>
<evidence type="ECO:0000269" key="13">
    <source>
    </source>
</evidence>
<evidence type="ECO:0000305" key="14"/>
<evidence type="ECO:0007744" key="15">
    <source>
    </source>
</evidence>
<keyword id="KW-0007">Acetylation</keyword>
<keyword id="KW-0010">Activator</keyword>
<keyword id="KW-0238">DNA-binding</keyword>
<keyword id="KW-0391">Immunity</keyword>
<keyword id="KW-0395">Inflammatory response</keyword>
<keyword id="KW-0479">Metal-binding</keyword>
<keyword id="KW-0539">Nucleus</keyword>
<keyword id="KW-0597">Phosphoprotein</keyword>
<keyword id="KW-1185">Reference proteome</keyword>
<keyword id="KW-0677">Repeat</keyword>
<keyword id="KW-0678">Repressor</keyword>
<keyword id="KW-0804">Transcription</keyword>
<keyword id="KW-0805">Transcription regulation</keyword>
<keyword id="KW-0832">Ubl conjugation</keyword>
<keyword id="KW-0862">Zinc</keyword>
<keyword id="KW-0863">Zinc-finger</keyword>